<proteinExistence type="inferred from homology"/>
<name>RS2_STAAS</name>
<gene>
    <name evidence="1" type="primary">rpsB</name>
    <name type="ordered locus">SAS1190</name>
</gene>
<evidence type="ECO:0000255" key="1">
    <source>
        <dbReference type="HAMAP-Rule" id="MF_00291"/>
    </source>
</evidence>
<evidence type="ECO:0000256" key="2">
    <source>
        <dbReference type="SAM" id="MobiDB-lite"/>
    </source>
</evidence>
<evidence type="ECO:0000305" key="3"/>
<comment type="similarity">
    <text evidence="1">Belongs to the universal ribosomal protein uS2 family.</text>
</comment>
<keyword id="KW-0687">Ribonucleoprotein</keyword>
<keyword id="KW-0689">Ribosomal protein</keyword>
<sequence length="255" mass="29094">MAVISMKQLLEAGVHFGHQTRRWNPKMKKYIFTERNGIYIIDLQKTVKKVDEAYNFLKQVSEDGGQVLFVGTKKQAQESVKSEAERAGQFYINQRWLGGLLTNYKTISKRIKRISEIEKMEEDGLFEVLPKKEVVELKKEYDRLIKFLGGIRDMKSMPQALFVVDPRKERNAIAEARKLNIPIVGIVDTNCDPDEIDYVIPANDDAIRAVKLLTAKMADAILEGQQGVSNEEVAAEQNIDLDEKEKSEETEATEE</sequence>
<reference key="1">
    <citation type="journal article" date="2004" name="Proc. Natl. Acad. Sci. U.S.A.">
        <title>Complete genomes of two clinical Staphylococcus aureus strains: evidence for the rapid evolution of virulence and drug resistance.</title>
        <authorList>
            <person name="Holden M.T.G."/>
            <person name="Feil E.J."/>
            <person name="Lindsay J.A."/>
            <person name="Peacock S.J."/>
            <person name="Day N.P.J."/>
            <person name="Enright M.C."/>
            <person name="Foster T.J."/>
            <person name="Moore C.E."/>
            <person name="Hurst L."/>
            <person name="Atkin R."/>
            <person name="Barron A."/>
            <person name="Bason N."/>
            <person name="Bentley S.D."/>
            <person name="Chillingworth C."/>
            <person name="Chillingworth T."/>
            <person name="Churcher C."/>
            <person name="Clark L."/>
            <person name="Corton C."/>
            <person name="Cronin A."/>
            <person name="Doggett J."/>
            <person name="Dowd L."/>
            <person name="Feltwell T."/>
            <person name="Hance Z."/>
            <person name="Harris B."/>
            <person name="Hauser H."/>
            <person name="Holroyd S."/>
            <person name="Jagels K."/>
            <person name="James K.D."/>
            <person name="Lennard N."/>
            <person name="Line A."/>
            <person name="Mayes R."/>
            <person name="Moule S."/>
            <person name="Mungall K."/>
            <person name="Ormond D."/>
            <person name="Quail M.A."/>
            <person name="Rabbinowitsch E."/>
            <person name="Rutherford K.M."/>
            <person name="Sanders M."/>
            <person name="Sharp S."/>
            <person name="Simmonds M."/>
            <person name="Stevens K."/>
            <person name="Whitehead S."/>
            <person name="Barrell B.G."/>
            <person name="Spratt B.G."/>
            <person name="Parkhill J."/>
        </authorList>
    </citation>
    <scope>NUCLEOTIDE SEQUENCE [LARGE SCALE GENOMIC DNA]</scope>
    <source>
        <strain>MSSA476</strain>
    </source>
</reference>
<dbReference type="EMBL" id="BX571857">
    <property type="protein sequence ID" value="CAG42967.1"/>
    <property type="molecule type" value="Genomic_DNA"/>
</dbReference>
<dbReference type="RefSeq" id="WP_000268484.1">
    <property type="nucleotide sequence ID" value="NC_002953.3"/>
</dbReference>
<dbReference type="SMR" id="Q6G9V7"/>
<dbReference type="GeneID" id="98345571"/>
<dbReference type="KEGG" id="sas:SAS1190"/>
<dbReference type="HOGENOM" id="CLU_040318_1_2_9"/>
<dbReference type="GO" id="GO:0022627">
    <property type="term" value="C:cytosolic small ribosomal subunit"/>
    <property type="evidence" value="ECO:0007669"/>
    <property type="project" value="TreeGrafter"/>
</dbReference>
<dbReference type="GO" id="GO:0003735">
    <property type="term" value="F:structural constituent of ribosome"/>
    <property type="evidence" value="ECO:0007669"/>
    <property type="project" value="InterPro"/>
</dbReference>
<dbReference type="GO" id="GO:0006412">
    <property type="term" value="P:translation"/>
    <property type="evidence" value="ECO:0007669"/>
    <property type="project" value="UniProtKB-UniRule"/>
</dbReference>
<dbReference type="CDD" id="cd01425">
    <property type="entry name" value="RPS2"/>
    <property type="match status" value="1"/>
</dbReference>
<dbReference type="FunFam" id="1.10.287.610:FF:000001">
    <property type="entry name" value="30S ribosomal protein S2"/>
    <property type="match status" value="1"/>
</dbReference>
<dbReference type="Gene3D" id="3.40.50.10490">
    <property type="entry name" value="Glucose-6-phosphate isomerase like protein, domain 1"/>
    <property type="match status" value="1"/>
</dbReference>
<dbReference type="Gene3D" id="1.10.287.610">
    <property type="entry name" value="Helix hairpin bin"/>
    <property type="match status" value="1"/>
</dbReference>
<dbReference type="HAMAP" id="MF_00291_B">
    <property type="entry name" value="Ribosomal_uS2_B"/>
    <property type="match status" value="1"/>
</dbReference>
<dbReference type="InterPro" id="IPR001865">
    <property type="entry name" value="Ribosomal_uS2"/>
</dbReference>
<dbReference type="InterPro" id="IPR005706">
    <property type="entry name" value="Ribosomal_uS2_bac/mit/plastid"/>
</dbReference>
<dbReference type="InterPro" id="IPR018130">
    <property type="entry name" value="Ribosomal_uS2_CS"/>
</dbReference>
<dbReference type="InterPro" id="IPR023591">
    <property type="entry name" value="Ribosomal_uS2_flav_dom_sf"/>
</dbReference>
<dbReference type="NCBIfam" id="TIGR01011">
    <property type="entry name" value="rpsB_bact"/>
    <property type="match status" value="1"/>
</dbReference>
<dbReference type="PANTHER" id="PTHR12534">
    <property type="entry name" value="30S RIBOSOMAL PROTEIN S2 PROKARYOTIC AND ORGANELLAR"/>
    <property type="match status" value="1"/>
</dbReference>
<dbReference type="PANTHER" id="PTHR12534:SF0">
    <property type="entry name" value="SMALL RIBOSOMAL SUBUNIT PROTEIN US2M"/>
    <property type="match status" value="1"/>
</dbReference>
<dbReference type="Pfam" id="PF00318">
    <property type="entry name" value="Ribosomal_S2"/>
    <property type="match status" value="1"/>
</dbReference>
<dbReference type="PRINTS" id="PR00395">
    <property type="entry name" value="RIBOSOMALS2"/>
</dbReference>
<dbReference type="SUPFAM" id="SSF52313">
    <property type="entry name" value="Ribosomal protein S2"/>
    <property type="match status" value="1"/>
</dbReference>
<dbReference type="PROSITE" id="PS00962">
    <property type="entry name" value="RIBOSOMAL_S2_1"/>
    <property type="match status" value="1"/>
</dbReference>
<dbReference type="PROSITE" id="PS00963">
    <property type="entry name" value="RIBOSOMAL_S2_2"/>
    <property type="match status" value="1"/>
</dbReference>
<protein>
    <recommendedName>
        <fullName evidence="1">Small ribosomal subunit protein uS2</fullName>
    </recommendedName>
    <alternativeName>
        <fullName evidence="3">30S ribosomal protein S2</fullName>
    </alternativeName>
</protein>
<accession>Q6G9V7</accession>
<feature type="chain" id="PRO_0000134242" description="Small ribosomal subunit protein uS2">
    <location>
        <begin position="1"/>
        <end position="255"/>
    </location>
</feature>
<feature type="region of interest" description="Disordered" evidence="2">
    <location>
        <begin position="226"/>
        <end position="255"/>
    </location>
</feature>
<organism>
    <name type="scientific">Staphylococcus aureus (strain MSSA476)</name>
    <dbReference type="NCBI Taxonomy" id="282459"/>
    <lineage>
        <taxon>Bacteria</taxon>
        <taxon>Bacillati</taxon>
        <taxon>Bacillota</taxon>
        <taxon>Bacilli</taxon>
        <taxon>Bacillales</taxon>
        <taxon>Staphylococcaceae</taxon>
        <taxon>Staphylococcus</taxon>
    </lineage>
</organism>